<reference key="1">
    <citation type="journal article" date="1983" name="Nucleic Acids Res.">
        <title>The gene for the small subunit of ribulose-1,5-bisphosphate carboxylase/oxygenase is located close to the gene for the large subunit in the cyanobacterium Anacystis nidulans 6301.</title>
        <authorList>
            <person name="Shinozaki K."/>
            <person name="Sugiura M."/>
        </authorList>
    </citation>
    <scope>NUCLEOTIDE SEQUENCE [GENOMIC DNA]</scope>
</reference>
<reference key="2">
    <citation type="journal article" date="1985" name="Mol. Gen. Genet.">
        <title>Genes for the large and small subunits of ribulose-1,5-bisphosphate carboxylase/oxygenase constitute a single operon in a cyanobacterium Anacystis nidulans 6301.</title>
        <authorList>
            <person name="Shinozaki K."/>
            <person name="Sugiura M."/>
        </authorList>
    </citation>
    <scope>NUCLEOTIDE SEQUENCE [GENOMIC DNA]</scope>
</reference>
<reference key="3">
    <citation type="journal article" date="2007" name="Photosyn. Res.">
        <title>Complete nucleotide sequence of the freshwater unicellular cyanobacterium Synechococcus elongatus PCC 6301 chromosome: gene content and organization.</title>
        <authorList>
            <person name="Sugita C."/>
            <person name="Ogata K."/>
            <person name="Shikata M."/>
            <person name="Jikuya H."/>
            <person name="Takano J."/>
            <person name="Furumichi M."/>
            <person name="Kanehisa M."/>
            <person name="Omata T."/>
            <person name="Sugiura M."/>
            <person name="Sugita M."/>
        </authorList>
    </citation>
    <scope>NUCLEOTIDE SEQUENCE [LARGE SCALE GENOMIC DNA]</scope>
    <source>
        <strain>ATCC 27144 / PCC 6301 / SAUG 1402/1</strain>
    </source>
</reference>
<reference key="4">
    <citation type="journal article" date="1999" name="Arch. Biochem. Biophys.">
        <title>Closely related form I ribulose bisphosphate carboxylase/oxygenase molecules that possess different CO2/O2 substrate specificities.</title>
        <authorList>
            <person name="Horken K.M."/>
            <person name="Tabita F.R."/>
        </authorList>
    </citation>
    <scope>FUNCTION</scope>
    <scope>CATALYTIC ACTIVITY</scope>
    <scope>BIOPHYSICOCHEMICAL PROPERTIES</scope>
</reference>
<reference key="5">
    <citation type="journal article" date="2007" name="Cell">
        <title>Structure and function of RbcX, an assembly chaperone for hexadecameric Rubisco.</title>
        <authorList>
            <person name="Saschenbrecker S."/>
            <person name="Bracher A."/>
            <person name="Rao K.V."/>
            <person name="Rao B.V."/>
            <person name="Hartl F.U."/>
            <person name="Hayer-Hartl M."/>
        </authorList>
    </citation>
    <scope>SUBUNIT</scope>
    <source>
        <strain>ATCC 27144 / PCC 6301 / SAUG 1402/1</strain>
    </source>
</reference>
<reference key="6">
    <citation type="journal article" date="2011" name="Nat. Struct. Mol. Biol.">
        <title>Crystal structure of a chaperone-bound assembly intermediate of form I Rubisco.</title>
        <authorList>
            <person name="Bracher A."/>
            <person name="Starling-Windhof A."/>
            <person name="Hartl F.U."/>
            <person name="Hayer-Hartl M."/>
        </authorList>
    </citation>
    <scope>FUNCTION</scope>
    <scope>FOLDING AND ASSEMBLY</scope>
    <scope>SUBUNIT</scope>
    <source>
        <strain>ATCC 27144 / PCC 6301 / SAUG 1402/1</strain>
    </source>
</reference>
<reference key="7">
    <citation type="journal article" date="1993" name="J. Biol. Chem.">
        <title>The X-ray structure of Synechococcus ribulose-bisphosphate carboxylase/oxygenase-activated quaternary complex at 2.2-A resolution.</title>
        <authorList>
            <person name="Newman J."/>
            <person name="Gutteridge S."/>
        </authorList>
    </citation>
    <scope>X-RAY CRYSTALLOGRAPHY (2.2 ANGSTROMS) OF 2-110 OF ACTIVATED HOLOENZYME IN COMPLEX WITH TRANSITION-STATE ANALOG 2-CABP</scope>
    <scope>SUBUNIT</scope>
</reference>
<reference evidence="9" key="8">
    <citation type="journal article" date="1994" name="Structure">
        <title>Structure of an effector-induced inactivated state of ribulose 1,5-bisphosphate carboxylase/oxygenase: the binary complex between enzyme and xylulose 1,5-bisphosphate.</title>
        <authorList>
            <person name="Newman J."/>
            <person name="Gutteridge S."/>
        </authorList>
    </citation>
    <scope>X-RAY CRYSTALLOGRAPHY (2.3 ANGSTROMS) OF INACTIVATED HOLOENZYME IN COMPLEX WITH PRODUCT ANALOG</scope>
    <scope>FUNCTION</scope>
    <scope>CATALYTIC ACTIVITY</scope>
    <scope>SUBUNIT</scope>
</reference>
<comment type="function">
    <text evidence="4 5 7">RuBisCO catalyzes two reactions: the carboxylation of D-ribulose 1,5-bisphosphate, the primary event in carbon dioxide fixation, as well as the oxidative fragmentation of the pentose substrate. Both reactions occur simultaneously and in competition at the same active site (PubMed:7922027, PubMed:9882445). The small subunit displaces RbcX2 from the RbcL8-(RbcX2)8 assembly intermediate, and stabilizes an RbcL loop ('Thr-64-Leu-70') in a catalytically competent conformation (PubMed:21765418).</text>
</comment>
<comment type="biophysicochemical properties">
    <kinetics>
        <KM evidence="7">39 uM for ribulose 1,5-bisphosphate</KM>
        <KM evidence="7">173 uM for CO(2)</KM>
        <Vmax evidence="7">2.5 umol/min/mg enzyme with CO(2) as substrate</Vmax>
        <text evidence="7">The CO(2)/O(2) specificity factor (tau) is 39.</text>
    </kinetics>
</comment>
<comment type="subunit">
    <text evidence="3 4 5 6">Heterohexadecamer of 8 large and 8 small subunits (PubMed:17574029, PubMed:21765418, PubMed:7922027, PubMed:8245022). Displaces RbcX2 from the RbcL8-(RbcX2)8 assembly intermediate (Probable) (PubMed:21765418).</text>
</comment>
<comment type="subcellular location">
    <subcellularLocation>
        <location evidence="2">Carboxysome</location>
    </subcellularLocation>
    <text evidence="1 8">In the carboxysome RuBisCO is organized into a paracrystalline array (By similarity). This cyanobacterium makes beta-type carboxysomes (Probable).</text>
</comment>
<comment type="miscellaneous">
    <text evidence="2 3 5 6">The basic functional RuBisCO is composed of a large chain homodimer in a 'head-to-tail' conformation. In form I RuBisCO this homodimer is arranged in a barrel-like tetramer with the small subunits forming a tetrameric 'cap' on each end of the 'barrel'.</text>
</comment>
<comment type="similarity">
    <text evidence="2">Belongs to the RuBisCO small chain family.</text>
</comment>
<name>RBS_SYNP6</name>
<organism>
    <name type="scientific">Synechococcus sp. (strain ATCC 27144 / PCC 6301 / SAUG 1402/1)</name>
    <name type="common">Anacystis nidulans</name>
    <dbReference type="NCBI Taxonomy" id="269084"/>
    <lineage>
        <taxon>Bacteria</taxon>
        <taxon>Bacillati</taxon>
        <taxon>Cyanobacteriota</taxon>
        <taxon>Cyanophyceae</taxon>
        <taxon>Synechococcales</taxon>
        <taxon>Synechococcaceae</taxon>
        <taxon>Synechococcus</taxon>
    </lineage>
</organism>
<protein>
    <recommendedName>
        <fullName evidence="2">Ribulose bisphosphate carboxylase small subunit</fullName>
        <shortName evidence="2">RuBisCO small subunit</shortName>
    </recommendedName>
</protein>
<gene>
    <name evidence="2" type="primary">cbbS</name>
    <name evidence="2" type="synonym">rbcS</name>
    <name type="ordered locus">syc0129_c</name>
</gene>
<feature type="initiator methionine" description="Removed">
    <location>
        <position position="1"/>
    </location>
</feature>
<feature type="chain" id="PRO_0000198624" description="Ribulose bisphosphate carboxylase small subunit">
    <location>
        <begin position="2"/>
        <end position="111"/>
    </location>
</feature>
<feature type="region of interest" description="Hydrophobic">
    <location>
        <begin position="12"/>
        <end position="21"/>
    </location>
</feature>
<feature type="turn" evidence="10">
    <location>
        <begin position="14"/>
        <end position="17"/>
    </location>
</feature>
<feature type="helix" evidence="10">
    <location>
        <begin position="23"/>
        <end position="36"/>
    </location>
</feature>
<feature type="strand" evidence="10">
    <location>
        <begin position="39"/>
        <end position="46"/>
    </location>
</feature>
<feature type="strand" evidence="11">
    <location>
        <begin position="56"/>
        <end position="60"/>
    </location>
</feature>
<feature type="helix" evidence="10">
    <location>
        <begin position="68"/>
        <end position="81"/>
    </location>
</feature>
<feature type="strand" evidence="10">
    <location>
        <begin position="85"/>
        <end position="93"/>
    </location>
</feature>
<feature type="turn" evidence="10">
    <location>
        <begin position="94"/>
        <end position="97"/>
    </location>
</feature>
<feature type="strand" evidence="10">
    <location>
        <begin position="98"/>
        <end position="106"/>
    </location>
</feature>
<proteinExistence type="evidence at protein level"/>
<evidence type="ECO:0000250" key="1">
    <source>
        <dbReference type="UniProtKB" id="Q31NB2"/>
    </source>
</evidence>
<evidence type="ECO:0000255" key="2">
    <source>
        <dbReference type="HAMAP-Rule" id="MF_00859"/>
    </source>
</evidence>
<evidence type="ECO:0000269" key="3">
    <source>
    </source>
</evidence>
<evidence type="ECO:0000269" key="4">
    <source>
    </source>
</evidence>
<evidence type="ECO:0000269" key="5">
    <source>
    </source>
</evidence>
<evidence type="ECO:0000269" key="6">
    <source>
    </source>
</evidence>
<evidence type="ECO:0000269" key="7">
    <source>
    </source>
</evidence>
<evidence type="ECO:0000305" key="8"/>
<evidence type="ECO:0007744" key="9">
    <source>
        <dbReference type="PDB" id="1RSC"/>
    </source>
</evidence>
<evidence type="ECO:0007829" key="10">
    <source>
        <dbReference type="PDB" id="1RBL"/>
    </source>
</evidence>
<evidence type="ECO:0007829" key="11">
    <source>
        <dbReference type="PDB" id="1UZH"/>
    </source>
</evidence>
<keyword id="KW-0002">3D-structure</keyword>
<keyword id="KW-1283">Bacterial microcompartment</keyword>
<keyword id="KW-0113">Calvin cycle</keyword>
<keyword id="KW-0120">Carbon dioxide fixation</keyword>
<keyword id="KW-1282">Carboxysome</keyword>
<keyword id="KW-0601">Photorespiration</keyword>
<keyword id="KW-0602">Photosynthesis</keyword>
<accession>P04716</accession>
<sequence>MSMKTLPKERRFETFSYLPPLSDRQIAAQIEYMIEQGFHPLIEFNEHSNPEEFYWTMWKLPLFDCKSPQQVLDEVRECRSEYGDCYIRVAGFDNIKQCQTVSFIVHRPGRY</sequence>
<dbReference type="EMBL" id="X03220">
    <property type="protein sequence ID" value="CAA26973.1"/>
    <property type="molecule type" value="Genomic_DNA"/>
</dbReference>
<dbReference type="EMBL" id="AP008231">
    <property type="protein sequence ID" value="BAD78319.1"/>
    <property type="molecule type" value="Genomic_DNA"/>
</dbReference>
<dbReference type="PIR" id="S07351">
    <property type="entry name" value="RKYCS"/>
</dbReference>
<dbReference type="PDB" id="1RBL">
    <property type="method" value="X-ray"/>
    <property type="resolution" value="2.20 A"/>
    <property type="chains" value="I/J/K/L/M/N/O/P=2-110"/>
</dbReference>
<dbReference type="PDB" id="1RSC">
    <property type="method" value="X-ray"/>
    <property type="resolution" value="2.30 A"/>
    <property type="chains" value="I/J/K/L/M/N/O/P=1-111"/>
</dbReference>
<dbReference type="PDB" id="1UZH">
    <property type="method" value="X-ray"/>
    <property type="resolution" value="2.20 A"/>
    <property type="chains" value="C/F/I/J/M/P/T/W=12-58, C/F/I/J/M/P/T/W=102-110"/>
</dbReference>
<dbReference type="PDBsum" id="1RBL"/>
<dbReference type="PDBsum" id="1RSC"/>
<dbReference type="PDBsum" id="1UZH"/>
<dbReference type="SMR" id="P04716"/>
<dbReference type="DIP" id="DIP-6211N"/>
<dbReference type="KEGG" id="syc:syc0129_c"/>
<dbReference type="eggNOG" id="COG4451">
    <property type="taxonomic scope" value="Bacteria"/>
</dbReference>
<dbReference type="SABIO-RK" id="P04716"/>
<dbReference type="CD-CODE" id="29B486D9">
    <property type="entry name" value="Synthetic Condensate 000221"/>
</dbReference>
<dbReference type="CD-CODE" id="5ED75EB5">
    <property type="entry name" value="Synthetic Condensate 000145"/>
</dbReference>
<dbReference type="CD-CODE" id="6EF1C41E">
    <property type="entry name" value="Synthetic Condensate 000225"/>
</dbReference>
<dbReference type="EvolutionaryTrace" id="P04716"/>
<dbReference type="Proteomes" id="UP000001175">
    <property type="component" value="Chromosome"/>
</dbReference>
<dbReference type="GO" id="GO:0031470">
    <property type="term" value="C:carboxysome"/>
    <property type="evidence" value="ECO:0007669"/>
    <property type="project" value="UniProtKB-SubCell"/>
</dbReference>
<dbReference type="GO" id="GO:0016984">
    <property type="term" value="F:ribulose-bisphosphate carboxylase activity"/>
    <property type="evidence" value="ECO:0007669"/>
    <property type="project" value="UniProtKB-UniRule"/>
</dbReference>
<dbReference type="GO" id="GO:0009853">
    <property type="term" value="P:photorespiration"/>
    <property type="evidence" value="ECO:0007669"/>
    <property type="project" value="UniProtKB-KW"/>
</dbReference>
<dbReference type="GO" id="GO:0019253">
    <property type="term" value="P:reductive pentose-phosphate cycle"/>
    <property type="evidence" value="ECO:0007669"/>
    <property type="project" value="UniProtKB-UniRule"/>
</dbReference>
<dbReference type="CDD" id="cd03527">
    <property type="entry name" value="RuBisCO_small"/>
    <property type="match status" value="1"/>
</dbReference>
<dbReference type="Gene3D" id="3.30.190.10">
    <property type="entry name" value="Ribulose bisphosphate carboxylase, small subunit"/>
    <property type="match status" value="1"/>
</dbReference>
<dbReference type="HAMAP" id="MF_00859">
    <property type="entry name" value="RuBisCO_S_bact"/>
    <property type="match status" value="1"/>
</dbReference>
<dbReference type="InterPro" id="IPR024681">
    <property type="entry name" value="RuBisCO_ssu"/>
</dbReference>
<dbReference type="InterPro" id="IPR000894">
    <property type="entry name" value="RuBisCO_ssu_dom"/>
</dbReference>
<dbReference type="InterPro" id="IPR036385">
    <property type="entry name" value="RuBisCO_ssu_sf"/>
</dbReference>
<dbReference type="PANTHER" id="PTHR31262">
    <property type="entry name" value="RIBULOSE BISPHOSPHATE CARBOXYLASE SMALL CHAIN 1, CHLOROPLASTIC"/>
    <property type="match status" value="1"/>
</dbReference>
<dbReference type="Pfam" id="PF00101">
    <property type="entry name" value="RuBisCO_small"/>
    <property type="match status" value="1"/>
</dbReference>
<dbReference type="SMART" id="SM00961">
    <property type="entry name" value="RuBisCO_small"/>
    <property type="match status" value="1"/>
</dbReference>
<dbReference type="SUPFAM" id="SSF55239">
    <property type="entry name" value="RuBisCO, small subunit"/>
    <property type="match status" value="1"/>
</dbReference>